<comment type="function">
    <text evidence="1 2">Translation factor that promotes translation elongation and termination, particularly upon ribosome stalling at specific amino acid sequence contexts (By similarity). Binds between the exit (E) and peptidyl (P) site of the ribosome and promotes rescue of stalled ribosome: specifically required for efficient translation of polyproline-containing peptides as well as other motifs that stall the ribosome. Acts as a ribosome quality control (RQC) cofactor by joining the RQC complex to facilitate peptidyl transfer during CAT tailing step (By similarity). Also involved in actin dynamics and cell cycle progression, mRNA decay and probably in a pathway involved in stress response and maintenance of cell wall integrity (By similarity).</text>
</comment>
<comment type="subcellular location">
    <subcellularLocation>
        <location evidence="2">Cytoplasm</location>
    </subcellularLocation>
    <subcellularLocation>
        <location evidence="2">Nucleus</location>
    </subcellularLocation>
    <subcellularLocation>
        <location evidence="2">Endoplasmic reticulum membrane</location>
        <topology evidence="2">Peripheral membrane protein</topology>
        <orientation evidence="2">Cytoplasmic side</orientation>
    </subcellularLocation>
    <text evidence="2">Hypusine modification promotes the nuclear export and cytoplasmic localization and there was a dynamic shift in the localization from predominantly cytoplasmic to primarily nuclear under apoptotic inducing conditions.</text>
</comment>
<comment type="PTM">
    <text evidence="2">Lys-50 undergoes hypusination, a unique post-translational modification that consists in the addition of a butylamino group from spermidine to lysine side chain, leading to the formation of the unusual amino acid hypusine. eIF-5As are the only known proteins to undergo this modification, which is essential for their function.</text>
</comment>
<comment type="similarity">
    <text evidence="3">Belongs to the eIF-5A family.</text>
</comment>
<comment type="sequence caution" evidence="3">
    <conflict type="erroneous initiation">
        <sequence resource="EMBL-CDS" id="AAH70048"/>
    </conflict>
</comment>
<gene>
    <name type="primary">EIF5AL1</name>
</gene>
<name>IF5AL_HUMAN</name>
<dbReference type="EMBL" id="BC070048">
    <property type="protein sequence ID" value="AAH70048.1"/>
    <property type="status" value="ALT_INIT"/>
    <property type="molecule type" value="mRNA"/>
</dbReference>
<dbReference type="CCDS" id="CCDS53546.1"/>
<dbReference type="RefSeq" id="NP_001093162.1">
    <property type="nucleotide sequence ID" value="NM_001099692.2"/>
</dbReference>
<dbReference type="SMR" id="Q6IS14"/>
<dbReference type="BioGRID" id="126793">
    <property type="interactions" value="24"/>
</dbReference>
<dbReference type="FunCoup" id="Q6IS14">
    <property type="interactions" value="283"/>
</dbReference>
<dbReference type="IntAct" id="Q6IS14">
    <property type="interactions" value="6"/>
</dbReference>
<dbReference type="MINT" id="Q6IS14"/>
<dbReference type="STRING" id="9606.ENSP00000430706"/>
<dbReference type="TCDB" id="1.I.1.1.3">
    <property type="family name" value="the nuclear pore complex (npc) family"/>
</dbReference>
<dbReference type="GlyGen" id="Q6IS14">
    <property type="glycosylation" value="1 site, 1 O-linked glycan (1 site)"/>
</dbReference>
<dbReference type="iPTMnet" id="Q6IS14"/>
<dbReference type="PhosphoSitePlus" id="Q6IS14"/>
<dbReference type="SwissPalm" id="Q6IS14"/>
<dbReference type="BioMuta" id="EIF5AL1"/>
<dbReference type="DMDM" id="190359775"/>
<dbReference type="jPOST" id="Q6IS14"/>
<dbReference type="MassIVE" id="Q6IS14"/>
<dbReference type="PaxDb" id="9606-ENSP00000430706"/>
<dbReference type="PeptideAtlas" id="Q6IS14"/>
<dbReference type="PRIDE" id="Q6IS14"/>
<dbReference type="ProteomicsDB" id="66490"/>
<dbReference type="Pumba" id="Q6IS14"/>
<dbReference type="TopDownProteomics" id="Q6IS14"/>
<dbReference type="Antibodypedia" id="66911">
    <property type="antibodies" value="55 antibodies from 13 providers"/>
</dbReference>
<dbReference type="DNASU" id="143244"/>
<dbReference type="Ensembl" id="ENST00000520547.4">
    <property type="protein sequence ID" value="ENSP00000430706.2"/>
    <property type="gene ID" value="ENSG00000253626.4"/>
</dbReference>
<dbReference type="GeneID" id="143244"/>
<dbReference type="KEGG" id="hsa:143244"/>
<dbReference type="MANE-Select" id="ENST00000520547.4">
    <property type="protein sequence ID" value="ENSP00000430706.2"/>
    <property type="RefSeq nucleotide sequence ID" value="NM_001099692.2"/>
    <property type="RefSeq protein sequence ID" value="NP_001093162.1"/>
</dbReference>
<dbReference type="UCSC" id="uc009xrx.4">
    <property type="organism name" value="human"/>
</dbReference>
<dbReference type="AGR" id="HGNC:17419"/>
<dbReference type="CTD" id="143244"/>
<dbReference type="DisGeNET" id="143244"/>
<dbReference type="GeneCards" id="EIF5AL1"/>
<dbReference type="HGNC" id="HGNC:17419">
    <property type="gene designation" value="EIF5AL1"/>
</dbReference>
<dbReference type="HPA" id="ENSG00000253626">
    <property type="expression patterns" value="Tissue enriched (testis)"/>
</dbReference>
<dbReference type="neXtProt" id="NX_Q6IS14"/>
<dbReference type="OpenTargets" id="ENSG00000253626"/>
<dbReference type="PharmGKB" id="PA134920977"/>
<dbReference type="VEuPathDB" id="HostDB:ENSG00000253626"/>
<dbReference type="eggNOG" id="KOG3271">
    <property type="taxonomic scope" value="Eukaryota"/>
</dbReference>
<dbReference type="GeneTree" id="ENSGT00390000003738"/>
<dbReference type="HOGENOM" id="CLU_102600_0_0_1"/>
<dbReference type="InParanoid" id="Q6IS14"/>
<dbReference type="OMA" id="EITIHRW"/>
<dbReference type="OrthoDB" id="9975114at2759"/>
<dbReference type="PAN-GO" id="Q6IS14">
    <property type="GO annotations" value="2 GO annotations based on evolutionary models"/>
</dbReference>
<dbReference type="PhylomeDB" id="Q6IS14"/>
<dbReference type="TreeFam" id="TF101534"/>
<dbReference type="PathwayCommons" id="Q6IS14"/>
<dbReference type="SignaLink" id="Q6IS14"/>
<dbReference type="BioGRID-ORCS" id="143244">
    <property type="hits" value="305 hits in 1079 CRISPR screens"/>
</dbReference>
<dbReference type="CD-CODE" id="DEE660B4">
    <property type="entry name" value="Stress granule"/>
</dbReference>
<dbReference type="ChiTaRS" id="EIF5AL1">
    <property type="organism name" value="human"/>
</dbReference>
<dbReference type="GeneWiki" id="EIF5AP1"/>
<dbReference type="GenomeRNAi" id="143244"/>
<dbReference type="Pharos" id="Q6IS14">
    <property type="development level" value="Tdark"/>
</dbReference>
<dbReference type="PRO" id="PR:Q6IS14"/>
<dbReference type="Proteomes" id="UP000005640">
    <property type="component" value="Chromosome 10"/>
</dbReference>
<dbReference type="RNAct" id="Q6IS14">
    <property type="molecule type" value="protein"/>
</dbReference>
<dbReference type="Bgee" id="ENSG00000253626">
    <property type="expression patterns" value="Expressed in testis and 105 other cell types or tissues"/>
</dbReference>
<dbReference type="GO" id="GO:0005789">
    <property type="term" value="C:endoplasmic reticulum membrane"/>
    <property type="evidence" value="ECO:0007669"/>
    <property type="project" value="UniProtKB-SubCell"/>
</dbReference>
<dbReference type="GO" id="GO:0005634">
    <property type="term" value="C:nucleus"/>
    <property type="evidence" value="ECO:0007669"/>
    <property type="project" value="UniProtKB-SubCell"/>
</dbReference>
<dbReference type="GO" id="GO:0043022">
    <property type="term" value="F:ribosome binding"/>
    <property type="evidence" value="ECO:0007669"/>
    <property type="project" value="InterPro"/>
</dbReference>
<dbReference type="GO" id="GO:0003723">
    <property type="term" value="F:RNA binding"/>
    <property type="evidence" value="ECO:0007669"/>
    <property type="project" value="UniProtKB-KW"/>
</dbReference>
<dbReference type="GO" id="GO:0003746">
    <property type="term" value="F:translation elongation factor activity"/>
    <property type="evidence" value="ECO:0000318"/>
    <property type="project" value="GO_Central"/>
</dbReference>
<dbReference type="GO" id="GO:0045901">
    <property type="term" value="P:positive regulation of translational elongation"/>
    <property type="evidence" value="ECO:0007669"/>
    <property type="project" value="InterPro"/>
</dbReference>
<dbReference type="GO" id="GO:0045905">
    <property type="term" value="P:positive regulation of translational termination"/>
    <property type="evidence" value="ECO:0007669"/>
    <property type="project" value="InterPro"/>
</dbReference>
<dbReference type="GO" id="GO:0006414">
    <property type="term" value="P:translational elongation"/>
    <property type="evidence" value="ECO:0000318"/>
    <property type="project" value="GO_Central"/>
</dbReference>
<dbReference type="CDD" id="cd04468">
    <property type="entry name" value="S1_eIF5A"/>
    <property type="match status" value="1"/>
</dbReference>
<dbReference type="FunFam" id="2.30.30.30:FF:000007">
    <property type="entry name" value="Eukaryotic translation initiation factor 5A"/>
    <property type="match status" value="1"/>
</dbReference>
<dbReference type="FunFam" id="2.40.50.140:FF:000034">
    <property type="entry name" value="Eukaryotic translation initiation factor 5A"/>
    <property type="match status" value="1"/>
</dbReference>
<dbReference type="Gene3D" id="2.30.30.30">
    <property type="match status" value="1"/>
</dbReference>
<dbReference type="Gene3D" id="2.40.50.140">
    <property type="entry name" value="Nucleic acid-binding proteins"/>
    <property type="match status" value="1"/>
</dbReference>
<dbReference type="InterPro" id="IPR001884">
    <property type="entry name" value="IF5A-like"/>
</dbReference>
<dbReference type="InterPro" id="IPR048670">
    <property type="entry name" value="IF5A-like_N"/>
</dbReference>
<dbReference type="InterPro" id="IPR012340">
    <property type="entry name" value="NA-bd_OB-fold"/>
</dbReference>
<dbReference type="InterPro" id="IPR014722">
    <property type="entry name" value="Rib_uL2_dom2"/>
</dbReference>
<dbReference type="InterPro" id="IPR019769">
    <property type="entry name" value="Trans_elong_IF5A_hypusine_site"/>
</dbReference>
<dbReference type="InterPro" id="IPR020189">
    <property type="entry name" value="Transl_elong_IF5A_C"/>
</dbReference>
<dbReference type="InterPro" id="IPR008991">
    <property type="entry name" value="Translation_prot_SH3-like_sf"/>
</dbReference>
<dbReference type="NCBIfam" id="TIGR00037">
    <property type="entry name" value="eIF_5A"/>
    <property type="match status" value="1"/>
</dbReference>
<dbReference type="PANTHER" id="PTHR11673">
    <property type="entry name" value="TRANSLATION INITIATION FACTOR 5A FAMILY MEMBER"/>
    <property type="match status" value="1"/>
</dbReference>
<dbReference type="Pfam" id="PF01287">
    <property type="entry name" value="eIF-5a"/>
    <property type="match status" value="1"/>
</dbReference>
<dbReference type="Pfam" id="PF21485">
    <property type="entry name" value="IF5A-like_N"/>
    <property type="match status" value="1"/>
</dbReference>
<dbReference type="PIRSF" id="PIRSF003025">
    <property type="entry name" value="eIF5A"/>
    <property type="match status" value="1"/>
</dbReference>
<dbReference type="SMART" id="SM01376">
    <property type="entry name" value="eIF-5a"/>
    <property type="match status" value="1"/>
</dbReference>
<dbReference type="SUPFAM" id="SSF50249">
    <property type="entry name" value="Nucleic acid-binding proteins"/>
    <property type="match status" value="1"/>
</dbReference>
<dbReference type="SUPFAM" id="SSF50104">
    <property type="entry name" value="Translation proteins SH3-like domain"/>
    <property type="match status" value="1"/>
</dbReference>
<dbReference type="PROSITE" id="PS00302">
    <property type="entry name" value="IF5A_HYPUSINE"/>
    <property type="match status" value="1"/>
</dbReference>
<feature type="chain" id="PRO_0000340263" description="Eukaryotic translation initiation factor 5A-1-like">
    <location>
        <begin position="1"/>
        <end position="154"/>
    </location>
</feature>
<feature type="modified residue" description="Hypusine" evidence="2">
    <location>
        <position position="50"/>
    </location>
</feature>
<evidence type="ECO:0000250" key="1">
    <source>
        <dbReference type="UniProtKB" id="P23301"/>
    </source>
</evidence>
<evidence type="ECO:0000250" key="2">
    <source>
        <dbReference type="UniProtKB" id="P63241"/>
    </source>
</evidence>
<evidence type="ECO:0000305" key="3"/>
<keyword id="KW-0963">Cytoplasm</keyword>
<keyword id="KW-0251">Elongation factor</keyword>
<keyword id="KW-0256">Endoplasmic reticulum</keyword>
<keyword id="KW-0385">Hypusine</keyword>
<keyword id="KW-0472">Membrane</keyword>
<keyword id="KW-0539">Nucleus</keyword>
<keyword id="KW-0648">Protein biosynthesis</keyword>
<keyword id="KW-1267">Proteomics identification</keyword>
<keyword id="KW-1185">Reference proteome</keyword>
<keyword id="KW-0694">RNA-binding</keyword>
<protein>
    <recommendedName>
        <fullName>Eukaryotic translation initiation factor 5A-1-like</fullName>
        <shortName>eIF-5A-1-like</shortName>
        <shortName>eIF-5A1-like</shortName>
    </recommendedName>
    <alternativeName>
        <fullName>Eukaryotic initiation factor 5A isoform 1-like</fullName>
    </alternativeName>
</protein>
<proteinExistence type="evidence at protein level"/>
<accession>Q6IS14</accession>
<organism>
    <name type="scientific">Homo sapiens</name>
    <name type="common">Human</name>
    <dbReference type="NCBI Taxonomy" id="9606"/>
    <lineage>
        <taxon>Eukaryota</taxon>
        <taxon>Metazoa</taxon>
        <taxon>Chordata</taxon>
        <taxon>Craniata</taxon>
        <taxon>Vertebrata</taxon>
        <taxon>Euteleostomi</taxon>
        <taxon>Mammalia</taxon>
        <taxon>Eutheria</taxon>
        <taxon>Euarchontoglires</taxon>
        <taxon>Primates</taxon>
        <taxon>Haplorrhini</taxon>
        <taxon>Catarrhini</taxon>
        <taxon>Hominidae</taxon>
        <taxon>Homo</taxon>
    </lineage>
</organism>
<reference key="1">
    <citation type="journal article" date="2004" name="Genome Res.">
        <title>The status, quality, and expansion of the NIH full-length cDNA project: the Mammalian Gene Collection (MGC).</title>
        <authorList>
            <consortium name="The MGC Project Team"/>
        </authorList>
    </citation>
    <scope>NUCLEOTIDE SEQUENCE [LARGE SCALE MRNA]</scope>
    <source>
        <tissue>Testis</tissue>
    </source>
</reference>
<sequence length="154" mass="16773">MADDLDFETGDAGASATFPMQCSALRKNGFVVLKGWPCKIVEMSASKTGKHGHAKVHLVGIDIFTGKKYEDICPSTHNMDVPNIKRNDFQLIGIQDGYLSLLQDSGEVPEDLRLPEGDLGKEIEQKYDCGEEILITVLSAMTEEAAVAIKAMAK</sequence>